<organism>
    <name type="scientific">Chlorobaculum tepidum (strain ATCC 49652 / DSM 12025 / NBRC 103806 / TLS)</name>
    <name type="common">Chlorobium tepidum</name>
    <dbReference type="NCBI Taxonomy" id="194439"/>
    <lineage>
        <taxon>Bacteria</taxon>
        <taxon>Pseudomonadati</taxon>
        <taxon>Chlorobiota</taxon>
        <taxon>Chlorobiia</taxon>
        <taxon>Chlorobiales</taxon>
        <taxon>Chlorobiaceae</taxon>
        <taxon>Chlorobaculum</taxon>
    </lineage>
</organism>
<evidence type="ECO:0000255" key="1">
    <source>
        <dbReference type="HAMAP-Rule" id="MF_00150"/>
    </source>
</evidence>
<gene>
    <name evidence="1" type="primary">argC</name>
    <name type="ordered locus">CT1109</name>
</gene>
<name>ARGC_CHLTE</name>
<feature type="chain" id="PRO_0000112395" description="N-acetyl-gamma-glutamyl-phosphate reductase">
    <location>
        <begin position="1"/>
        <end position="341"/>
    </location>
</feature>
<feature type="active site" evidence="1">
    <location>
        <position position="151"/>
    </location>
</feature>
<keyword id="KW-0028">Amino-acid biosynthesis</keyword>
<keyword id="KW-0055">Arginine biosynthesis</keyword>
<keyword id="KW-0963">Cytoplasm</keyword>
<keyword id="KW-0521">NADP</keyword>
<keyword id="KW-0560">Oxidoreductase</keyword>
<keyword id="KW-1185">Reference proteome</keyword>
<proteinExistence type="inferred from homology"/>
<dbReference type="EC" id="1.2.1.38" evidence="1"/>
<dbReference type="EMBL" id="AE006470">
    <property type="protein sequence ID" value="AAM72342.1"/>
    <property type="molecule type" value="Genomic_DNA"/>
</dbReference>
<dbReference type="RefSeq" id="NP_662000.1">
    <property type="nucleotide sequence ID" value="NC_002932.3"/>
</dbReference>
<dbReference type="RefSeq" id="WP_010932787.1">
    <property type="nucleotide sequence ID" value="NC_002932.3"/>
</dbReference>
<dbReference type="SMR" id="Q8KDE3"/>
<dbReference type="STRING" id="194439.CT1109"/>
<dbReference type="EnsemblBacteria" id="AAM72342">
    <property type="protein sequence ID" value="AAM72342"/>
    <property type="gene ID" value="CT1109"/>
</dbReference>
<dbReference type="KEGG" id="cte:CT1109"/>
<dbReference type="PATRIC" id="fig|194439.7.peg.1007"/>
<dbReference type="eggNOG" id="COG0002">
    <property type="taxonomic scope" value="Bacteria"/>
</dbReference>
<dbReference type="HOGENOM" id="CLU_006384_0_1_10"/>
<dbReference type="OrthoDB" id="9801289at2"/>
<dbReference type="UniPathway" id="UPA00068">
    <property type="reaction ID" value="UER00108"/>
</dbReference>
<dbReference type="Proteomes" id="UP000001007">
    <property type="component" value="Chromosome"/>
</dbReference>
<dbReference type="GO" id="GO:0005737">
    <property type="term" value="C:cytoplasm"/>
    <property type="evidence" value="ECO:0007669"/>
    <property type="project" value="UniProtKB-SubCell"/>
</dbReference>
<dbReference type="GO" id="GO:0003942">
    <property type="term" value="F:N-acetyl-gamma-glutamyl-phosphate reductase activity"/>
    <property type="evidence" value="ECO:0007669"/>
    <property type="project" value="UniProtKB-UniRule"/>
</dbReference>
<dbReference type="GO" id="GO:0051287">
    <property type="term" value="F:NAD binding"/>
    <property type="evidence" value="ECO:0007669"/>
    <property type="project" value="InterPro"/>
</dbReference>
<dbReference type="GO" id="GO:0070401">
    <property type="term" value="F:NADP+ binding"/>
    <property type="evidence" value="ECO:0007669"/>
    <property type="project" value="InterPro"/>
</dbReference>
<dbReference type="GO" id="GO:0006526">
    <property type="term" value="P:L-arginine biosynthetic process"/>
    <property type="evidence" value="ECO:0007669"/>
    <property type="project" value="UniProtKB-UniRule"/>
</dbReference>
<dbReference type="CDD" id="cd23934">
    <property type="entry name" value="AGPR_1_C"/>
    <property type="match status" value="1"/>
</dbReference>
<dbReference type="CDD" id="cd17895">
    <property type="entry name" value="AGPR_1_N"/>
    <property type="match status" value="1"/>
</dbReference>
<dbReference type="Gene3D" id="3.30.360.10">
    <property type="entry name" value="Dihydrodipicolinate Reductase, domain 2"/>
    <property type="match status" value="1"/>
</dbReference>
<dbReference type="Gene3D" id="3.40.50.720">
    <property type="entry name" value="NAD(P)-binding Rossmann-like Domain"/>
    <property type="match status" value="1"/>
</dbReference>
<dbReference type="HAMAP" id="MF_00150">
    <property type="entry name" value="ArgC_type1"/>
    <property type="match status" value="1"/>
</dbReference>
<dbReference type="InterPro" id="IPR023013">
    <property type="entry name" value="AGPR_AS"/>
</dbReference>
<dbReference type="InterPro" id="IPR000706">
    <property type="entry name" value="AGPR_type-1"/>
</dbReference>
<dbReference type="InterPro" id="IPR036291">
    <property type="entry name" value="NAD(P)-bd_dom_sf"/>
</dbReference>
<dbReference type="InterPro" id="IPR050085">
    <property type="entry name" value="NAGSA_dehydrogenase"/>
</dbReference>
<dbReference type="InterPro" id="IPR000534">
    <property type="entry name" value="Semialdehyde_DH_NAD-bd"/>
</dbReference>
<dbReference type="NCBIfam" id="TIGR01850">
    <property type="entry name" value="argC"/>
    <property type="match status" value="1"/>
</dbReference>
<dbReference type="PANTHER" id="PTHR32338:SF10">
    <property type="entry name" value="N-ACETYL-GAMMA-GLUTAMYL-PHOSPHATE REDUCTASE, CHLOROPLASTIC-RELATED"/>
    <property type="match status" value="1"/>
</dbReference>
<dbReference type="PANTHER" id="PTHR32338">
    <property type="entry name" value="N-ACETYL-GAMMA-GLUTAMYL-PHOSPHATE REDUCTASE, CHLOROPLASTIC-RELATED-RELATED"/>
    <property type="match status" value="1"/>
</dbReference>
<dbReference type="Pfam" id="PF01118">
    <property type="entry name" value="Semialdhyde_dh"/>
    <property type="match status" value="1"/>
</dbReference>
<dbReference type="Pfam" id="PF22698">
    <property type="entry name" value="Semialdhyde_dhC_1"/>
    <property type="match status" value="1"/>
</dbReference>
<dbReference type="SMART" id="SM00859">
    <property type="entry name" value="Semialdhyde_dh"/>
    <property type="match status" value="1"/>
</dbReference>
<dbReference type="SUPFAM" id="SSF55347">
    <property type="entry name" value="Glyceraldehyde-3-phosphate dehydrogenase-like, C-terminal domain"/>
    <property type="match status" value="1"/>
</dbReference>
<dbReference type="SUPFAM" id="SSF51735">
    <property type="entry name" value="NAD(P)-binding Rossmann-fold domains"/>
    <property type="match status" value="1"/>
</dbReference>
<dbReference type="PROSITE" id="PS01224">
    <property type="entry name" value="ARGC"/>
    <property type="match status" value="1"/>
</dbReference>
<comment type="function">
    <text evidence="1">Catalyzes the NADPH-dependent reduction of N-acetyl-5-glutamyl phosphate to yield N-acetyl-L-glutamate 5-semialdehyde.</text>
</comment>
<comment type="catalytic activity">
    <reaction evidence="1">
        <text>N-acetyl-L-glutamate 5-semialdehyde + phosphate + NADP(+) = N-acetyl-L-glutamyl 5-phosphate + NADPH + H(+)</text>
        <dbReference type="Rhea" id="RHEA:21588"/>
        <dbReference type="ChEBI" id="CHEBI:15378"/>
        <dbReference type="ChEBI" id="CHEBI:29123"/>
        <dbReference type="ChEBI" id="CHEBI:43474"/>
        <dbReference type="ChEBI" id="CHEBI:57783"/>
        <dbReference type="ChEBI" id="CHEBI:57936"/>
        <dbReference type="ChEBI" id="CHEBI:58349"/>
        <dbReference type="EC" id="1.2.1.38"/>
    </reaction>
</comment>
<comment type="pathway">
    <text evidence="1">Amino-acid biosynthesis; L-arginine biosynthesis; N(2)-acetyl-L-ornithine from L-glutamate: step 3/4.</text>
</comment>
<comment type="subcellular location">
    <subcellularLocation>
        <location evidence="1">Cytoplasm</location>
    </subcellularLocation>
</comment>
<comment type="similarity">
    <text evidence="1">Belongs to the NAGSA dehydrogenase family. Type 1 subfamily.</text>
</comment>
<protein>
    <recommendedName>
        <fullName evidence="1">N-acetyl-gamma-glutamyl-phosphate reductase</fullName>
        <shortName evidence="1">AGPR</shortName>
        <ecNumber evidence="1">1.2.1.38</ecNumber>
    </recommendedName>
    <alternativeName>
        <fullName evidence="1">N-acetyl-glutamate semialdehyde dehydrogenase</fullName>
        <shortName evidence="1">NAGSA dehydrogenase</shortName>
    </alternativeName>
</protein>
<reference key="1">
    <citation type="journal article" date="2002" name="Proc. Natl. Acad. Sci. U.S.A.">
        <title>The complete genome sequence of Chlorobium tepidum TLS, a photosynthetic, anaerobic, green-sulfur bacterium.</title>
        <authorList>
            <person name="Eisen J.A."/>
            <person name="Nelson K.E."/>
            <person name="Paulsen I.T."/>
            <person name="Heidelberg J.F."/>
            <person name="Wu M."/>
            <person name="Dodson R.J."/>
            <person name="DeBoy R.T."/>
            <person name="Gwinn M.L."/>
            <person name="Nelson W.C."/>
            <person name="Haft D.H."/>
            <person name="Hickey E.K."/>
            <person name="Peterson J.D."/>
            <person name="Durkin A.S."/>
            <person name="Kolonay J.F."/>
            <person name="Yang F."/>
            <person name="Holt I.E."/>
            <person name="Umayam L.A."/>
            <person name="Mason T.M."/>
            <person name="Brenner M."/>
            <person name="Shea T.P."/>
            <person name="Parksey D.S."/>
            <person name="Nierman W.C."/>
            <person name="Feldblyum T.V."/>
            <person name="Hansen C.L."/>
            <person name="Craven M.B."/>
            <person name="Radune D."/>
            <person name="Vamathevan J.J."/>
            <person name="Khouri H.M."/>
            <person name="White O."/>
            <person name="Gruber T.M."/>
            <person name="Ketchum K.A."/>
            <person name="Venter J.C."/>
            <person name="Tettelin H."/>
            <person name="Bryant D.A."/>
            <person name="Fraser C.M."/>
        </authorList>
    </citation>
    <scope>NUCLEOTIDE SEQUENCE [LARGE SCALE GENOMIC DNA]</scope>
    <source>
        <strain>ATCC 49652 / DSM 12025 / NBRC 103806 / TLS</strain>
    </source>
</reference>
<sequence length="341" mass="36613">MNHIPMQNKKVTVSVIGASGYSGAELVKLLMKHPGIVIEELYAHTQAGKRFTELYPSIPCDKTFQTYAGQTNSDVYLLALPHGEALQLVPGIVAAGKKVIDLSGDFRLKNTAEHKRFYGGDKSAEDVLQYGMPELFRDEIAGSTAISNPGCYATSIILGLAPLFLGGMAGLDVESVNVTAVSGISGAGRSAKLELSFSEMSGNMRAYKVGKHQHTPEIMQTLGTSVTDPSFRFVFTPMIAPYVRGIYSVLNVRLASPVAMEPVRELYAGFYANAPFVRLRDGVTEVSHVAYTNFCDISLAFESDGSLVIITAIDNLVKGAAGQAVQNMNLMLGFGETTALL</sequence>
<accession>Q8KDE3</accession>